<feature type="chain" id="PRO_0000190253" description="Methylenetetrahydrofolate reductase 1">
    <location>
        <begin position="1"/>
        <end position="603"/>
    </location>
</feature>
<feature type="active site" description="Proton donor/acceptor" evidence="1">
    <location>
        <position position="21"/>
    </location>
</feature>
<feature type="binding site" evidence="1">
    <location>
        <begin position="21"/>
        <end position="26"/>
    </location>
    <ligand>
        <name>NAD(+)</name>
        <dbReference type="ChEBI" id="CHEBI:57540"/>
    </ligand>
</feature>
<feature type="binding site" evidence="1">
    <location>
        <begin position="53"/>
        <end position="54"/>
    </location>
    <ligand>
        <name>FAD</name>
        <dbReference type="ChEBI" id="CHEBI:57692"/>
    </ligand>
</feature>
<feature type="binding site" evidence="1">
    <location>
        <begin position="53"/>
        <end position="54"/>
    </location>
    <ligand>
        <name>NAD(+)</name>
        <dbReference type="ChEBI" id="CHEBI:57540"/>
    </ligand>
</feature>
<feature type="binding site" evidence="1">
    <location>
        <position position="82"/>
    </location>
    <ligand>
        <name>FAD</name>
        <dbReference type="ChEBI" id="CHEBI:57692"/>
    </ligand>
</feature>
<feature type="binding site" evidence="1">
    <location>
        <begin position="112"/>
        <end position="114"/>
    </location>
    <ligand>
        <name>FAD</name>
        <dbReference type="ChEBI" id="CHEBI:57692"/>
    </ligand>
</feature>
<feature type="binding site" evidence="1">
    <location>
        <position position="114"/>
    </location>
    <ligand>
        <name>substrate</name>
    </ligand>
</feature>
<feature type="binding site" evidence="1">
    <location>
        <begin position="130"/>
        <end position="131"/>
    </location>
    <ligand>
        <name>FAD</name>
        <dbReference type="ChEBI" id="CHEBI:57692"/>
    </ligand>
</feature>
<feature type="binding site" evidence="1">
    <location>
        <position position="153"/>
    </location>
    <ligand>
        <name>FAD</name>
        <dbReference type="ChEBI" id="CHEBI:57692"/>
    </ligand>
</feature>
<feature type="binding site" evidence="1">
    <location>
        <position position="173"/>
    </location>
    <ligand>
        <name>FAD</name>
        <dbReference type="ChEBI" id="CHEBI:57692"/>
    </ligand>
</feature>
<feature type="binding site" evidence="1">
    <location>
        <position position="184"/>
    </location>
    <ligand>
        <name>substrate</name>
    </ligand>
</feature>
<feature type="binding site" evidence="1">
    <location>
        <position position="276"/>
    </location>
    <ligand>
        <name>substrate</name>
    </ligand>
</feature>
<feature type="modified residue" description="Phosphoserine" evidence="3">
    <location>
        <position position="355"/>
    </location>
</feature>
<dbReference type="EC" id="1.5.1.20"/>
<dbReference type="EMBL" id="CU329670">
    <property type="protein sequence ID" value="CAA93581.1"/>
    <property type="molecule type" value="Genomic_DNA"/>
</dbReference>
<dbReference type="PIR" id="T38920">
    <property type="entry name" value="T38920"/>
</dbReference>
<dbReference type="RefSeq" id="NP_593224.1">
    <property type="nucleotide sequence ID" value="NM_001018621.2"/>
</dbReference>
<dbReference type="SMR" id="Q10258"/>
<dbReference type="BioGRID" id="279431">
    <property type="interactions" value="1"/>
</dbReference>
<dbReference type="FunCoup" id="Q10258">
    <property type="interactions" value="428"/>
</dbReference>
<dbReference type="STRING" id="284812.Q10258"/>
<dbReference type="iPTMnet" id="Q10258"/>
<dbReference type="PaxDb" id="4896-SPAC56F8.10.1"/>
<dbReference type="EnsemblFungi" id="SPAC56F8.10.1">
    <property type="protein sequence ID" value="SPAC56F8.10.1:pep"/>
    <property type="gene ID" value="SPAC56F8.10"/>
</dbReference>
<dbReference type="GeneID" id="2542993"/>
<dbReference type="KEGG" id="spo:2542993"/>
<dbReference type="PomBase" id="SPAC56F8.10">
    <property type="gene designation" value="met9"/>
</dbReference>
<dbReference type="VEuPathDB" id="FungiDB:SPAC56F8.10"/>
<dbReference type="eggNOG" id="KOG0564">
    <property type="taxonomic scope" value="Eukaryota"/>
</dbReference>
<dbReference type="HOGENOM" id="CLU_025841_2_1_1"/>
<dbReference type="InParanoid" id="Q10258"/>
<dbReference type="OMA" id="AWKEEFY"/>
<dbReference type="PhylomeDB" id="Q10258"/>
<dbReference type="BRENDA" id="1.5.1.20">
    <property type="organism ID" value="5613"/>
</dbReference>
<dbReference type="Reactome" id="R-SPO-196757">
    <property type="pathway name" value="Metabolism of folate and pterines"/>
</dbReference>
<dbReference type="UniPathway" id="UPA00193"/>
<dbReference type="PRO" id="PR:Q10258"/>
<dbReference type="Proteomes" id="UP000002485">
    <property type="component" value="Chromosome I"/>
</dbReference>
<dbReference type="GO" id="GO:0005739">
    <property type="term" value="C:mitochondrion"/>
    <property type="evidence" value="ECO:0000250"/>
    <property type="project" value="PomBase"/>
</dbReference>
<dbReference type="GO" id="GO:0071949">
    <property type="term" value="F:FAD binding"/>
    <property type="evidence" value="ECO:0000318"/>
    <property type="project" value="GO_Central"/>
</dbReference>
<dbReference type="GO" id="GO:0004489">
    <property type="term" value="F:methylenetetrahydrofolate reductase (NAD(P)H) activity"/>
    <property type="evidence" value="ECO:0000315"/>
    <property type="project" value="PomBase"/>
</dbReference>
<dbReference type="GO" id="GO:0106312">
    <property type="term" value="F:methylenetetrahydrofolate reductase (NADH) activity"/>
    <property type="evidence" value="ECO:0007669"/>
    <property type="project" value="RHEA"/>
</dbReference>
<dbReference type="GO" id="GO:0106313">
    <property type="term" value="F:methylenetetrahydrofolate reductase (NADPH) activity"/>
    <property type="evidence" value="ECO:0007669"/>
    <property type="project" value="RHEA"/>
</dbReference>
<dbReference type="GO" id="GO:0009086">
    <property type="term" value="P:methionine biosynthetic process"/>
    <property type="evidence" value="ECO:0000318"/>
    <property type="project" value="GO_Central"/>
</dbReference>
<dbReference type="GO" id="GO:0035999">
    <property type="term" value="P:tetrahydrofolate interconversion"/>
    <property type="evidence" value="ECO:0000269"/>
    <property type="project" value="PomBase"/>
</dbReference>
<dbReference type="CDD" id="cd00537">
    <property type="entry name" value="MTHFR"/>
    <property type="match status" value="1"/>
</dbReference>
<dbReference type="FunFam" id="3.20.20.220:FF:000002">
    <property type="entry name" value="Methylenetetrahydrofolate reductase"/>
    <property type="match status" value="1"/>
</dbReference>
<dbReference type="Gene3D" id="3.20.20.220">
    <property type="match status" value="1"/>
</dbReference>
<dbReference type="InterPro" id="IPR029041">
    <property type="entry name" value="FAD-linked_oxidoreductase-like"/>
</dbReference>
<dbReference type="InterPro" id="IPR004621">
    <property type="entry name" value="Fadh2_euk"/>
</dbReference>
<dbReference type="InterPro" id="IPR003171">
    <property type="entry name" value="Mehydrof_redctse-like"/>
</dbReference>
<dbReference type="InterPro" id="IPR053806">
    <property type="entry name" value="MTHFR_C"/>
</dbReference>
<dbReference type="NCBIfam" id="TIGR00677">
    <property type="entry name" value="fadh2_euk"/>
    <property type="match status" value="1"/>
</dbReference>
<dbReference type="PANTHER" id="PTHR45754">
    <property type="entry name" value="METHYLENETETRAHYDROFOLATE REDUCTASE"/>
    <property type="match status" value="1"/>
</dbReference>
<dbReference type="PANTHER" id="PTHR45754:SF3">
    <property type="entry name" value="METHYLENETETRAHYDROFOLATE REDUCTASE (NADPH)"/>
    <property type="match status" value="1"/>
</dbReference>
<dbReference type="Pfam" id="PF02219">
    <property type="entry name" value="MTHFR"/>
    <property type="match status" value="1"/>
</dbReference>
<dbReference type="Pfam" id="PF21895">
    <property type="entry name" value="MTHFR_C"/>
    <property type="match status" value="1"/>
</dbReference>
<dbReference type="SUPFAM" id="SSF51730">
    <property type="entry name" value="FAD-linked oxidoreductase"/>
    <property type="match status" value="1"/>
</dbReference>
<accession>Q10258</accession>
<keyword id="KW-0274">FAD</keyword>
<keyword id="KW-0285">Flavoprotein</keyword>
<keyword id="KW-0521">NADP</keyword>
<keyword id="KW-0560">Oxidoreductase</keyword>
<keyword id="KW-0597">Phosphoprotein</keyword>
<keyword id="KW-1185">Reference proteome</keyword>
<organism>
    <name type="scientific">Schizosaccharomyces pombe (strain 972 / ATCC 24843)</name>
    <name type="common">Fission yeast</name>
    <dbReference type="NCBI Taxonomy" id="284812"/>
    <lineage>
        <taxon>Eukaryota</taxon>
        <taxon>Fungi</taxon>
        <taxon>Dikarya</taxon>
        <taxon>Ascomycota</taxon>
        <taxon>Taphrinomycotina</taxon>
        <taxon>Schizosaccharomycetes</taxon>
        <taxon>Schizosaccharomycetales</taxon>
        <taxon>Schizosaccharomycetaceae</taxon>
        <taxon>Schizosaccharomyces</taxon>
    </lineage>
</organism>
<evidence type="ECO:0000250" key="1"/>
<evidence type="ECO:0000269" key="2">
    <source>
    </source>
</evidence>
<evidence type="ECO:0000269" key="3">
    <source>
    </source>
</evidence>
<evidence type="ECO:0000305" key="4"/>
<protein>
    <recommendedName>
        <fullName>Methylenetetrahydrofolate reductase 1</fullName>
        <ecNumber>1.5.1.20</ecNumber>
    </recommendedName>
</protein>
<sequence length="603" mass="69012">MKISDKLLHPDWKEKVTYSYEFFPPKTSTGVQNLYNRIDRMKTWGRPMFVDVTWGAGGTSSELTPGIVNVIQTDFEVDTCMHLTCTNMSTEMIDAALKRAHETGCRNILALRGDPVKDTDWTEGESGFRYASDLVRYIRTHYNDEFCIGVAGYPEGYSPDDDIDESIKHLKLKVDEGADFIVTQMFYDVDNFIAWVDKVRAAGINIPIFPGIMPIQAWDSFIRRAKWSGVKIPQHFMDTLVPVKDDDEGVRERGVELIVEMCRKLIASGITRLHFYTMNLEKAVKMIIERLGLLDENLAPIVDTNNVELTNASSQDRRINEGVRPIFWRTRNESYVSRTDQWDELPHGRWGDSRSPAFGEFDAIRYGLRMSPKEITTSWGSPKSYSEIGDLFARYCEKKISSLPWSDLPISDEADLIRDQLLSMNRNAFLTINSQPALNGEKSSHPVFGWGPPNGYVFQKPYVEFFVHPSLLNELKETVKKLNSVSYFVTNKNGDLDTNSQYEIPNAVTWGVFPNREIIQPTIVESTSFLAWKDEAYSLGMEWANAYSPDSISRKLLVSMMKEWFLCVIVDNDFQNGQSLFDVFNKMRSLKDIHPELYYANAS</sequence>
<reference key="1">
    <citation type="journal article" date="2002" name="Yeast">
        <title>Two non-complementing genes encoding enzymatically active methylenetetrahydrofolate reductases control methionine requirement in fission yeast Schizosaccharomyces pombe.</title>
        <authorList>
            <person name="Naula N."/>
            <person name="Walther C."/>
            <person name="Baumann D."/>
            <person name="Schweingruber M.E."/>
        </authorList>
    </citation>
    <scope>NUCLEOTIDE SEQUENCE [GENOMIC DNA]</scope>
    <scope>FUNCTION</scope>
    <scope>CATALYTIC ACTIVITY</scope>
    <scope>DISRUPTION PHENOTYPE</scope>
</reference>
<reference key="2">
    <citation type="journal article" date="2002" name="Nature">
        <title>The genome sequence of Schizosaccharomyces pombe.</title>
        <authorList>
            <person name="Wood V."/>
            <person name="Gwilliam R."/>
            <person name="Rajandream M.A."/>
            <person name="Lyne M.H."/>
            <person name="Lyne R."/>
            <person name="Stewart A."/>
            <person name="Sgouros J.G."/>
            <person name="Peat N."/>
            <person name="Hayles J."/>
            <person name="Baker S.G."/>
            <person name="Basham D."/>
            <person name="Bowman S."/>
            <person name="Brooks K."/>
            <person name="Brown D."/>
            <person name="Brown S."/>
            <person name="Chillingworth T."/>
            <person name="Churcher C.M."/>
            <person name="Collins M."/>
            <person name="Connor R."/>
            <person name="Cronin A."/>
            <person name="Davis P."/>
            <person name="Feltwell T."/>
            <person name="Fraser A."/>
            <person name="Gentles S."/>
            <person name="Goble A."/>
            <person name="Hamlin N."/>
            <person name="Harris D.E."/>
            <person name="Hidalgo J."/>
            <person name="Hodgson G."/>
            <person name="Holroyd S."/>
            <person name="Hornsby T."/>
            <person name="Howarth S."/>
            <person name="Huckle E.J."/>
            <person name="Hunt S."/>
            <person name="Jagels K."/>
            <person name="James K.D."/>
            <person name="Jones L."/>
            <person name="Jones M."/>
            <person name="Leather S."/>
            <person name="McDonald S."/>
            <person name="McLean J."/>
            <person name="Mooney P."/>
            <person name="Moule S."/>
            <person name="Mungall K.L."/>
            <person name="Murphy L.D."/>
            <person name="Niblett D."/>
            <person name="Odell C."/>
            <person name="Oliver K."/>
            <person name="O'Neil S."/>
            <person name="Pearson D."/>
            <person name="Quail M.A."/>
            <person name="Rabbinowitsch E."/>
            <person name="Rutherford K.M."/>
            <person name="Rutter S."/>
            <person name="Saunders D."/>
            <person name="Seeger K."/>
            <person name="Sharp S."/>
            <person name="Skelton J."/>
            <person name="Simmonds M.N."/>
            <person name="Squares R."/>
            <person name="Squares S."/>
            <person name="Stevens K."/>
            <person name="Taylor K."/>
            <person name="Taylor R.G."/>
            <person name="Tivey A."/>
            <person name="Walsh S.V."/>
            <person name="Warren T."/>
            <person name="Whitehead S."/>
            <person name="Woodward J.R."/>
            <person name="Volckaert G."/>
            <person name="Aert R."/>
            <person name="Robben J."/>
            <person name="Grymonprez B."/>
            <person name="Weltjens I."/>
            <person name="Vanstreels E."/>
            <person name="Rieger M."/>
            <person name="Schaefer M."/>
            <person name="Mueller-Auer S."/>
            <person name="Gabel C."/>
            <person name="Fuchs M."/>
            <person name="Duesterhoeft A."/>
            <person name="Fritzc C."/>
            <person name="Holzer E."/>
            <person name="Moestl D."/>
            <person name="Hilbert H."/>
            <person name="Borzym K."/>
            <person name="Langer I."/>
            <person name="Beck A."/>
            <person name="Lehrach H."/>
            <person name="Reinhardt R."/>
            <person name="Pohl T.M."/>
            <person name="Eger P."/>
            <person name="Zimmermann W."/>
            <person name="Wedler H."/>
            <person name="Wambutt R."/>
            <person name="Purnelle B."/>
            <person name="Goffeau A."/>
            <person name="Cadieu E."/>
            <person name="Dreano S."/>
            <person name="Gloux S."/>
            <person name="Lelaure V."/>
            <person name="Mottier S."/>
            <person name="Galibert F."/>
            <person name="Aves S.J."/>
            <person name="Xiang Z."/>
            <person name="Hunt C."/>
            <person name="Moore K."/>
            <person name="Hurst S.M."/>
            <person name="Lucas M."/>
            <person name="Rochet M."/>
            <person name="Gaillardin C."/>
            <person name="Tallada V.A."/>
            <person name="Garzon A."/>
            <person name="Thode G."/>
            <person name="Daga R.R."/>
            <person name="Cruzado L."/>
            <person name="Jimenez J."/>
            <person name="Sanchez M."/>
            <person name="del Rey F."/>
            <person name="Benito J."/>
            <person name="Dominguez A."/>
            <person name="Revuelta J.L."/>
            <person name="Moreno S."/>
            <person name="Armstrong J."/>
            <person name="Forsburg S.L."/>
            <person name="Cerutti L."/>
            <person name="Lowe T."/>
            <person name="McCombie W.R."/>
            <person name="Paulsen I."/>
            <person name="Potashkin J."/>
            <person name="Shpakovski G.V."/>
            <person name="Ussery D."/>
            <person name="Barrell B.G."/>
            <person name="Nurse P."/>
        </authorList>
    </citation>
    <scope>NUCLEOTIDE SEQUENCE [LARGE SCALE GENOMIC DNA]</scope>
    <source>
        <strain>972 / ATCC 24843</strain>
    </source>
</reference>
<reference key="3">
    <citation type="journal article" date="2008" name="J. Proteome Res.">
        <title>Phosphoproteome analysis of fission yeast.</title>
        <authorList>
            <person name="Wilson-Grady J.T."/>
            <person name="Villen J."/>
            <person name="Gygi S.P."/>
        </authorList>
    </citation>
    <scope>PHOSPHORYLATION [LARGE SCALE ANALYSIS] AT SER-355</scope>
    <scope>IDENTIFICATION BY MASS SPECTROMETRY</scope>
</reference>
<name>MTHR1_SCHPO</name>
<proteinExistence type="evidence at protein level"/>
<comment type="function">
    <text evidence="2">Major methylenetetrahydrofolate reductase required to generate the methyl groups necessary for methionine synthetase to convert homocysteine to methionine. Performs 80 to 85 percent of the total methylenetetrahydrofolate reductase activity of the cells.</text>
</comment>
<comment type="catalytic activity">
    <reaction evidence="2">
        <text>(6S)-5-methyl-5,6,7,8-tetrahydrofolate + NADP(+) = (6R)-5,10-methylene-5,6,7,8-tetrahydrofolate + NADPH + H(+)</text>
        <dbReference type="Rhea" id="RHEA:19817"/>
        <dbReference type="ChEBI" id="CHEBI:15378"/>
        <dbReference type="ChEBI" id="CHEBI:15636"/>
        <dbReference type="ChEBI" id="CHEBI:18608"/>
        <dbReference type="ChEBI" id="CHEBI:57783"/>
        <dbReference type="ChEBI" id="CHEBI:58349"/>
        <dbReference type="EC" id="1.5.1.20"/>
    </reaction>
</comment>
<comment type="catalytic activity">
    <reaction evidence="2">
        <text>(6S)-5-methyl-5,6,7,8-tetrahydrofolate + NAD(+) = (6R)-5,10-methylene-5,6,7,8-tetrahydrofolate + NADH + H(+)</text>
        <dbReference type="Rhea" id="RHEA:19821"/>
        <dbReference type="ChEBI" id="CHEBI:15378"/>
        <dbReference type="ChEBI" id="CHEBI:15636"/>
        <dbReference type="ChEBI" id="CHEBI:18608"/>
        <dbReference type="ChEBI" id="CHEBI:57540"/>
        <dbReference type="ChEBI" id="CHEBI:57945"/>
        <dbReference type="EC" id="1.5.1.20"/>
    </reaction>
</comment>
<comment type="cofactor">
    <cofactor evidence="1">
        <name>FAD</name>
        <dbReference type="ChEBI" id="CHEBI:57692"/>
    </cofactor>
</comment>
<comment type="pathway">
    <text>One-carbon metabolism; tetrahydrofolate interconversion.</text>
</comment>
<comment type="disruption phenotype">
    <text evidence="2">Leads to strict auxotrophy for methionine.</text>
</comment>
<comment type="similarity">
    <text evidence="4">Belongs to the methylenetetrahydrofolate reductase family.</text>
</comment>
<gene>
    <name type="primary">met9</name>
    <name type="ORF">SPAC56F8.10</name>
</gene>